<organism>
    <name type="scientific">Danio rerio</name>
    <name type="common">Zebrafish</name>
    <name type="synonym">Brachydanio rerio</name>
    <dbReference type="NCBI Taxonomy" id="7955"/>
    <lineage>
        <taxon>Eukaryota</taxon>
        <taxon>Metazoa</taxon>
        <taxon>Chordata</taxon>
        <taxon>Craniata</taxon>
        <taxon>Vertebrata</taxon>
        <taxon>Euteleostomi</taxon>
        <taxon>Actinopterygii</taxon>
        <taxon>Neopterygii</taxon>
        <taxon>Teleostei</taxon>
        <taxon>Ostariophysi</taxon>
        <taxon>Cypriniformes</taxon>
        <taxon>Danionidae</taxon>
        <taxon>Danioninae</taxon>
        <taxon>Danio</taxon>
    </lineage>
</organism>
<accession>A8KB87</accession>
<dbReference type="EMBL" id="BC154011">
    <property type="protein sequence ID" value="AAI54012.1"/>
    <property type="molecule type" value="mRNA"/>
</dbReference>
<dbReference type="SMR" id="A8KB87"/>
<dbReference type="FunCoup" id="A8KB87">
    <property type="interactions" value="1018"/>
</dbReference>
<dbReference type="STRING" id="7955.ENSDARP00000140676"/>
<dbReference type="PaxDb" id="7955-ENSDARP00000098911"/>
<dbReference type="PeptideAtlas" id="A8KB87"/>
<dbReference type="AGR" id="ZFIN:ZDB-GENE-060810-187"/>
<dbReference type="ZFIN" id="ZDB-GENE-060810-187">
    <property type="gene designation" value="coa3a"/>
</dbReference>
<dbReference type="eggNOG" id="KOG4782">
    <property type="taxonomic scope" value="Eukaryota"/>
</dbReference>
<dbReference type="InParanoid" id="A8KB87"/>
<dbReference type="PhylomeDB" id="A8KB87"/>
<dbReference type="Reactome" id="R-DRE-9864848">
    <property type="pathway name" value="Complex IV assembly"/>
</dbReference>
<dbReference type="PRO" id="PR:A8KB87"/>
<dbReference type="Proteomes" id="UP000000437">
    <property type="component" value="Unplaced"/>
</dbReference>
<dbReference type="GO" id="GO:0005743">
    <property type="term" value="C:mitochondrial inner membrane"/>
    <property type="evidence" value="ECO:0000250"/>
    <property type="project" value="UniProtKB"/>
</dbReference>
<dbReference type="GO" id="GO:0033617">
    <property type="term" value="P:mitochondrial cytochrome c oxidase assembly"/>
    <property type="evidence" value="ECO:0000250"/>
    <property type="project" value="UniProtKB"/>
</dbReference>
<dbReference type="GO" id="GO:0070131">
    <property type="term" value="P:positive regulation of mitochondrial translation"/>
    <property type="evidence" value="ECO:0000250"/>
    <property type="project" value="UniProtKB"/>
</dbReference>
<dbReference type="InterPro" id="IPR041752">
    <property type="entry name" value="Coa3"/>
</dbReference>
<dbReference type="InterPro" id="IPR018628">
    <property type="entry name" value="Coa3_cc"/>
</dbReference>
<dbReference type="PANTHER" id="PTHR15642:SF3">
    <property type="entry name" value="CYTOCHROME C OXIDASE ASSEMBLY FACTOR 3 HOMOLOG, MITOCHONDRIAL"/>
    <property type="match status" value="1"/>
</dbReference>
<dbReference type="PANTHER" id="PTHR15642">
    <property type="entry name" value="CYTOCHROME C OXIDASE ASSEMBLY FACTOR 3, MITOCHONDRIAL"/>
    <property type="match status" value="1"/>
</dbReference>
<dbReference type="Pfam" id="PF09813">
    <property type="entry name" value="Coa3_cc"/>
    <property type="match status" value="1"/>
</dbReference>
<keyword id="KW-0472">Membrane</keyword>
<keyword id="KW-0496">Mitochondrion</keyword>
<keyword id="KW-0999">Mitochondrion inner membrane</keyword>
<keyword id="KW-1185">Reference proteome</keyword>
<keyword id="KW-0812">Transmembrane</keyword>
<keyword id="KW-1133">Transmembrane helix</keyword>
<gene>
    <name type="primary">coa3a</name>
    <name type="synonym">ccdc56</name>
    <name type="synonym">coa3</name>
    <name type="ORF">zgc:171846</name>
</gene>
<sequence length="96" mass="10788">MSSQGEPKPEAQFAKRIDPTKEALTKEQLQFIRQVEMAQWKKKTDKLRGRNVATGLAIGAVVLGIYGYTFYSVSQEKIMDEIDEEAKVRVPKTGAN</sequence>
<protein>
    <recommendedName>
        <fullName>Cytochrome c oxidase assembly factor 3 homolog, mitochondrial</fullName>
    </recommendedName>
    <alternativeName>
        <fullName>Coiled-coil domain-containing protein 56</fullName>
    </alternativeName>
</protein>
<name>COA3_DANRE</name>
<evidence type="ECO:0000250" key="1"/>
<evidence type="ECO:0000250" key="2">
    <source>
        <dbReference type="UniProtKB" id="Q9Y2R0"/>
    </source>
</evidence>
<evidence type="ECO:0000255" key="3"/>
<evidence type="ECO:0000305" key="4"/>
<reference key="1">
    <citation type="submission" date="2007-10" db="EMBL/GenBank/DDBJ databases">
        <authorList>
            <consortium name="NIH - Zebrafish Gene Collection (ZGC) project"/>
        </authorList>
    </citation>
    <scope>NUCLEOTIDE SEQUENCE [LARGE SCALE MRNA]</scope>
    <source>
        <tissue>Brain</tissue>
    </source>
</reference>
<comment type="function">
    <text evidence="2">Core component of the MITRAC (mitochondrial translation regulation assembly intermediate of cytochrome c oxidase complex) complex, that regulates cytochrome c oxidase assembly. MITRAC complexes regulate both translation of mitochondrial encoded components and assembly of nuclear-encoded components imported in mitochondrion. Required for efficient translation of MT-CO1 and mitochondrial respiratory chain complex IV assembly.</text>
</comment>
<comment type="subunit">
    <text evidence="2">Core component of the MITRAC (mitochondrial translation regulation assembly intermediate of cytochrome c oxidase complex) complex.</text>
</comment>
<comment type="subcellular location">
    <subcellularLocation>
        <location evidence="1">Mitochondrion inner membrane</location>
        <topology evidence="1">Single-pass membrane protein</topology>
    </subcellularLocation>
</comment>
<comment type="similarity">
    <text evidence="4">Belongs to the COA3 family.</text>
</comment>
<feature type="chain" id="PRO_0000360401" description="Cytochrome c oxidase assembly factor 3 homolog, mitochondrial">
    <location>
        <begin position="1"/>
        <end position="96"/>
    </location>
</feature>
<feature type="topological domain" description="Mitochondrial matrix" evidence="3">
    <location>
        <begin position="1"/>
        <end position="50"/>
    </location>
</feature>
<feature type="transmembrane region" description="Helical" evidence="3">
    <location>
        <begin position="51"/>
        <end position="73"/>
    </location>
</feature>
<feature type="topological domain" description="Mitochondrial intermembrane" evidence="3">
    <location>
        <begin position="74"/>
        <end position="96"/>
    </location>
</feature>
<proteinExistence type="inferred from homology"/>